<proteinExistence type="inferred from homology"/>
<name>HSLV_BACAA</name>
<comment type="function">
    <text evidence="1">Protease subunit of a proteasome-like degradation complex believed to be a general protein degrading machinery.</text>
</comment>
<comment type="catalytic activity">
    <reaction evidence="1">
        <text>ATP-dependent cleavage of peptide bonds with broad specificity.</text>
        <dbReference type="EC" id="3.4.25.2"/>
    </reaction>
</comment>
<comment type="activity regulation">
    <text evidence="1">Allosterically activated by HslU binding.</text>
</comment>
<comment type="subunit">
    <text evidence="1">A double ring-shaped homohexamer of HslV is capped on each side by a ring-shaped HslU homohexamer. The assembly of the HslU/HslV complex is dependent on binding of ATP.</text>
</comment>
<comment type="subcellular location">
    <subcellularLocation>
        <location evidence="1">Cytoplasm</location>
    </subcellularLocation>
</comment>
<comment type="similarity">
    <text evidence="1">Belongs to the peptidase T1B family. HslV subfamily.</text>
</comment>
<accession>C3P5N2</accession>
<dbReference type="EC" id="3.4.25.2" evidence="1"/>
<dbReference type="EMBL" id="CP001598">
    <property type="protein sequence ID" value="ACQ49748.1"/>
    <property type="molecule type" value="Genomic_DNA"/>
</dbReference>
<dbReference type="RefSeq" id="WP_000526272.1">
    <property type="nucleotide sequence ID" value="NC_012659.1"/>
</dbReference>
<dbReference type="SMR" id="C3P5N2"/>
<dbReference type="MEROPS" id="T01.007"/>
<dbReference type="GeneID" id="45023658"/>
<dbReference type="KEGG" id="bai:BAA_3991"/>
<dbReference type="HOGENOM" id="CLU_093872_1_0_9"/>
<dbReference type="GO" id="GO:0009376">
    <property type="term" value="C:HslUV protease complex"/>
    <property type="evidence" value="ECO:0007669"/>
    <property type="project" value="UniProtKB-UniRule"/>
</dbReference>
<dbReference type="GO" id="GO:0005839">
    <property type="term" value="C:proteasome core complex"/>
    <property type="evidence" value="ECO:0007669"/>
    <property type="project" value="InterPro"/>
</dbReference>
<dbReference type="GO" id="GO:0046872">
    <property type="term" value="F:metal ion binding"/>
    <property type="evidence" value="ECO:0007669"/>
    <property type="project" value="UniProtKB-KW"/>
</dbReference>
<dbReference type="GO" id="GO:0004298">
    <property type="term" value="F:threonine-type endopeptidase activity"/>
    <property type="evidence" value="ECO:0007669"/>
    <property type="project" value="UniProtKB-KW"/>
</dbReference>
<dbReference type="GO" id="GO:0051603">
    <property type="term" value="P:proteolysis involved in protein catabolic process"/>
    <property type="evidence" value="ECO:0007669"/>
    <property type="project" value="InterPro"/>
</dbReference>
<dbReference type="CDD" id="cd01913">
    <property type="entry name" value="protease_HslV"/>
    <property type="match status" value="1"/>
</dbReference>
<dbReference type="Gene3D" id="3.60.20.10">
    <property type="entry name" value="Glutamine Phosphoribosylpyrophosphate, subunit 1, domain 1"/>
    <property type="match status" value="1"/>
</dbReference>
<dbReference type="HAMAP" id="MF_00248">
    <property type="entry name" value="HslV"/>
    <property type="match status" value="1"/>
</dbReference>
<dbReference type="InterPro" id="IPR022281">
    <property type="entry name" value="ATP-dep_Prtase_HsIV_su"/>
</dbReference>
<dbReference type="InterPro" id="IPR029055">
    <property type="entry name" value="Ntn_hydrolases_N"/>
</dbReference>
<dbReference type="InterPro" id="IPR001353">
    <property type="entry name" value="Proteasome_sua/b"/>
</dbReference>
<dbReference type="InterPro" id="IPR023333">
    <property type="entry name" value="Proteasome_suB-type"/>
</dbReference>
<dbReference type="NCBIfam" id="TIGR03692">
    <property type="entry name" value="ATP_dep_HslV"/>
    <property type="match status" value="1"/>
</dbReference>
<dbReference type="NCBIfam" id="NF003964">
    <property type="entry name" value="PRK05456.1"/>
    <property type="match status" value="1"/>
</dbReference>
<dbReference type="PANTHER" id="PTHR32194:SF0">
    <property type="entry name" value="ATP-DEPENDENT PROTEASE SUBUNIT HSLV"/>
    <property type="match status" value="1"/>
</dbReference>
<dbReference type="PANTHER" id="PTHR32194">
    <property type="entry name" value="METALLOPROTEASE TLDD"/>
    <property type="match status" value="1"/>
</dbReference>
<dbReference type="Pfam" id="PF00227">
    <property type="entry name" value="Proteasome"/>
    <property type="match status" value="1"/>
</dbReference>
<dbReference type="PIRSF" id="PIRSF039093">
    <property type="entry name" value="HslV"/>
    <property type="match status" value="1"/>
</dbReference>
<dbReference type="SUPFAM" id="SSF56235">
    <property type="entry name" value="N-terminal nucleophile aminohydrolases (Ntn hydrolases)"/>
    <property type="match status" value="1"/>
</dbReference>
<dbReference type="PROSITE" id="PS51476">
    <property type="entry name" value="PROTEASOME_BETA_2"/>
    <property type="match status" value="1"/>
</dbReference>
<gene>
    <name evidence="1" type="primary">hslV</name>
    <name type="ordered locus">BAA_3991</name>
</gene>
<keyword id="KW-0021">Allosteric enzyme</keyword>
<keyword id="KW-0963">Cytoplasm</keyword>
<keyword id="KW-0378">Hydrolase</keyword>
<keyword id="KW-0479">Metal-binding</keyword>
<keyword id="KW-0645">Protease</keyword>
<keyword id="KW-0915">Sodium</keyword>
<keyword id="KW-0888">Threonine protease</keyword>
<evidence type="ECO:0000255" key="1">
    <source>
        <dbReference type="HAMAP-Rule" id="MF_00248"/>
    </source>
</evidence>
<sequence length="180" mass="19449">MGNFHATTIFAVHHNGECAMAGDGQVTMGNAVVMKHTARKVRKLFQGKVLAGFAGSVADAFTLFEMFEGKLEEYNGNLQRAAVEMAKQWRGDKMLRQLEAMLIVMDKTTMLLVSGTGEVIEPDDGILAIGSGGNYALSAGRALKQYASEHLTAKQIAKASLEIAGDICVYTNHNIIVEEL</sequence>
<protein>
    <recommendedName>
        <fullName evidence="1">ATP-dependent protease subunit HslV</fullName>
        <ecNumber evidence="1">3.4.25.2</ecNumber>
    </recommendedName>
</protein>
<organism>
    <name type="scientific">Bacillus anthracis (strain A0248)</name>
    <dbReference type="NCBI Taxonomy" id="592021"/>
    <lineage>
        <taxon>Bacteria</taxon>
        <taxon>Bacillati</taxon>
        <taxon>Bacillota</taxon>
        <taxon>Bacilli</taxon>
        <taxon>Bacillales</taxon>
        <taxon>Bacillaceae</taxon>
        <taxon>Bacillus</taxon>
        <taxon>Bacillus cereus group</taxon>
    </lineage>
</organism>
<reference key="1">
    <citation type="submission" date="2009-04" db="EMBL/GenBank/DDBJ databases">
        <title>Genome sequence of Bacillus anthracis A0248.</title>
        <authorList>
            <person name="Dodson R.J."/>
            <person name="Munk A.C."/>
            <person name="Bruce D."/>
            <person name="Detter C."/>
            <person name="Tapia R."/>
            <person name="Sutton G."/>
            <person name="Sims D."/>
            <person name="Brettin T."/>
        </authorList>
    </citation>
    <scope>NUCLEOTIDE SEQUENCE [LARGE SCALE GENOMIC DNA]</scope>
    <source>
        <strain>A0248</strain>
    </source>
</reference>
<feature type="chain" id="PRO_1000192667" description="ATP-dependent protease subunit HslV">
    <location>
        <begin position="1"/>
        <end position="180"/>
    </location>
</feature>
<feature type="active site" evidence="1">
    <location>
        <position position="7"/>
    </location>
</feature>
<feature type="binding site" evidence="1">
    <location>
        <position position="165"/>
    </location>
    <ligand>
        <name>Na(+)</name>
        <dbReference type="ChEBI" id="CHEBI:29101"/>
    </ligand>
</feature>
<feature type="binding site" evidence="1">
    <location>
        <position position="168"/>
    </location>
    <ligand>
        <name>Na(+)</name>
        <dbReference type="ChEBI" id="CHEBI:29101"/>
    </ligand>
</feature>
<feature type="binding site" evidence="1">
    <location>
        <position position="171"/>
    </location>
    <ligand>
        <name>Na(+)</name>
        <dbReference type="ChEBI" id="CHEBI:29101"/>
    </ligand>
</feature>